<name>MURG_LACLA</name>
<keyword id="KW-0131">Cell cycle</keyword>
<keyword id="KW-0132">Cell division</keyword>
<keyword id="KW-1003">Cell membrane</keyword>
<keyword id="KW-0133">Cell shape</keyword>
<keyword id="KW-0961">Cell wall biogenesis/degradation</keyword>
<keyword id="KW-0328">Glycosyltransferase</keyword>
<keyword id="KW-0472">Membrane</keyword>
<keyword id="KW-0573">Peptidoglycan synthesis</keyword>
<keyword id="KW-1185">Reference proteome</keyword>
<keyword id="KW-0808">Transferase</keyword>
<gene>
    <name evidence="1" type="primary">murG</name>
    <name type="ordered locus">LL1589</name>
    <name type="ORF">L0238</name>
</gene>
<dbReference type="EC" id="2.4.1.227" evidence="1"/>
<dbReference type="EMBL" id="AE005176">
    <property type="protein sequence ID" value="AAK05687.1"/>
    <property type="molecule type" value="Genomic_DNA"/>
</dbReference>
<dbReference type="PIR" id="E86823">
    <property type="entry name" value="E86823"/>
</dbReference>
<dbReference type="RefSeq" id="NP_267745.1">
    <property type="nucleotide sequence ID" value="NC_002662.1"/>
</dbReference>
<dbReference type="RefSeq" id="WP_003130746.1">
    <property type="nucleotide sequence ID" value="NC_002662.1"/>
</dbReference>
<dbReference type="SMR" id="Q9CF92"/>
<dbReference type="CAZy" id="GT28">
    <property type="family name" value="Glycosyltransferase Family 28"/>
</dbReference>
<dbReference type="PaxDb" id="272623-L0238"/>
<dbReference type="EnsemblBacteria" id="AAK05687">
    <property type="protein sequence ID" value="AAK05687"/>
    <property type="gene ID" value="L0238"/>
</dbReference>
<dbReference type="GeneID" id="89633785"/>
<dbReference type="KEGG" id="lla:L0238"/>
<dbReference type="PATRIC" id="fig|272623.7.peg.1709"/>
<dbReference type="eggNOG" id="COG0707">
    <property type="taxonomic scope" value="Bacteria"/>
</dbReference>
<dbReference type="HOGENOM" id="CLU_037404_0_1_9"/>
<dbReference type="OrthoDB" id="9808936at2"/>
<dbReference type="UniPathway" id="UPA00219"/>
<dbReference type="Proteomes" id="UP000002196">
    <property type="component" value="Chromosome"/>
</dbReference>
<dbReference type="GO" id="GO:0005886">
    <property type="term" value="C:plasma membrane"/>
    <property type="evidence" value="ECO:0007669"/>
    <property type="project" value="UniProtKB-SubCell"/>
</dbReference>
<dbReference type="GO" id="GO:0050511">
    <property type="term" value="F:undecaprenyldiphospho-muramoylpentapeptide beta-N-acetylglucosaminyltransferase activity"/>
    <property type="evidence" value="ECO:0007669"/>
    <property type="project" value="UniProtKB-UniRule"/>
</dbReference>
<dbReference type="GO" id="GO:0005975">
    <property type="term" value="P:carbohydrate metabolic process"/>
    <property type="evidence" value="ECO:0007669"/>
    <property type="project" value="InterPro"/>
</dbReference>
<dbReference type="GO" id="GO:0051301">
    <property type="term" value="P:cell division"/>
    <property type="evidence" value="ECO:0007669"/>
    <property type="project" value="UniProtKB-KW"/>
</dbReference>
<dbReference type="GO" id="GO:0071555">
    <property type="term" value="P:cell wall organization"/>
    <property type="evidence" value="ECO:0007669"/>
    <property type="project" value="UniProtKB-KW"/>
</dbReference>
<dbReference type="GO" id="GO:0030259">
    <property type="term" value="P:lipid glycosylation"/>
    <property type="evidence" value="ECO:0007669"/>
    <property type="project" value="UniProtKB-UniRule"/>
</dbReference>
<dbReference type="GO" id="GO:0009252">
    <property type="term" value="P:peptidoglycan biosynthetic process"/>
    <property type="evidence" value="ECO:0007669"/>
    <property type="project" value="UniProtKB-UniRule"/>
</dbReference>
<dbReference type="GO" id="GO:0008360">
    <property type="term" value="P:regulation of cell shape"/>
    <property type="evidence" value="ECO:0007669"/>
    <property type="project" value="UniProtKB-KW"/>
</dbReference>
<dbReference type="CDD" id="cd03785">
    <property type="entry name" value="GT28_MurG"/>
    <property type="match status" value="1"/>
</dbReference>
<dbReference type="Gene3D" id="3.40.50.2000">
    <property type="entry name" value="Glycogen Phosphorylase B"/>
    <property type="match status" value="2"/>
</dbReference>
<dbReference type="HAMAP" id="MF_00033">
    <property type="entry name" value="MurG"/>
    <property type="match status" value="1"/>
</dbReference>
<dbReference type="InterPro" id="IPR006009">
    <property type="entry name" value="GlcNAc_MurG"/>
</dbReference>
<dbReference type="InterPro" id="IPR007235">
    <property type="entry name" value="Glyco_trans_28_C"/>
</dbReference>
<dbReference type="InterPro" id="IPR004276">
    <property type="entry name" value="GlycoTrans_28_N"/>
</dbReference>
<dbReference type="NCBIfam" id="TIGR01133">
    <property type="entry name" value="murG"/>
    <property type="match status" value="1"/>
</dbReference>
<dbReference type="PANTHER" id="PTHR21015:SF22">
    <property type="entry name" value="GLYCOSYLTRANSFERASE"/>
    <property type="match status" value="1"/>
</dbReference>
<dbReference type="PANTHER" id="PTHR21015">
    <property type="entry name" value="UDP-N-ACETYLGLUCOSAMINE--N-ACETYLMURAMYL-(PENTAPEPTIDE) PYROPHOSPHORYL-UNDECAPRENOL N-ACETYLGLUCOSAMINE TRANSFERASE 1"/>
    <property type="match status" value="1"/>
</dbReference>
<dbReference type="Pfam" id="PF04101">
    <property type="entry name" value="Glyco_tran_28_C"/>
    <property type="match status" value="1"/>
</dbReference>
<dbReference type="Pfam" id="PF03033">
    <property type="entry name" value="Glyco_transf_28"/>
    <property type="match status" value="1"/>
</dbReference>
<dbReference type="SUPFAM" id="SSF53756">
    <property type="entry name" value="UDP-Glycosyltransferase/glycogen phosphorylase"/>
    <property type="match status" value="1"/>
</dbReference>
<sequence>MRIIITGGGTGGHIYPALAFLKYLEKVEPDTEVLYIGTKKGLEAKIVPQAGIKLKTVDIQGLRRSLSPQNLKTAYKFFKSVSDAKKIMKEFKPDVVLGTGGYVAGPVVYAAAQLKIPTIIHEGNSFPGITNRFLAKKVDRIAVGFHAAEQYFPASKTTFTGNPRAQEVADAAAQVEKFEEPTVVIFGGSRGALKLNNAFIEALPELAQRSFKTVYASGEIYYDDYKETFNQYKENSNLDIRPYINNMTELLAKSQLFLGRSGSTTIAEVTALGLPAVYVPSPNVTADQQTKNAQEYVDQGAAIIIKDEDLTGQTLVEAISNILENNEKYQEMQAASLKAGVPDASQRLYNLVKEISK</sequence>
<comment type="function">
    <text evidence="1">Cell wall formation. Catalyzes the transfer of a GlcNAc subunit on undecaprenyl-pyrophosphoryl-MurNAc-pentapeptide (lipid intermediate I) to form undecaprenyl-pyrophosphoryl-MurNAc-(pentapeptide)GlcNAc (lipid intermediate II).</text>
</comment>
<comment type="catalytic activity">
    <reaction evidence="1">
        <text>Mur2Ac(oyl-L-Ala-gamma-D-Glu-L-Lys-D-Ala-D-Ala)-di-trans,octa-cis-undecaprenyl diphosphate + UDP-N-acetyl-alpha-D-glucosamine = beta-D-GlcNAc-(1-&gt;4)-Mur2Ac(oyl-L-Ala-gamma-D-Glu-L-Lys-D-Ala-D-Ala)-di-trans,octa-cis-undecaprenyl diphosphate + UDP + H(+)</text>
        <dbReference type="Rhea" id="RHEA:23192"/>
        <dbReference type="ChEBI" id="CHEBI:15378"/>
        <dbReference type="ChEBI" id="CHEBI:57705"/>
        <dbReference type="ChEBI" id="CHEBI:58223"/>
        <dbReference type="ChEBI" id="CHEBI:60032"/>
        <dbReference type="ChEBI" id="CHEBI:60033"/>
        <dbReference type="EC" id="2.4.1.227"/>
    </reaction>
</comment>
<comment type="pathway">
    <text evidence="1">Cell wall biogenesis; peptidoglycan biosynthesis.</text>
</comment>
<comment type="subcellular location">
    <subcellularLocation>
        <location evidence="1">Cell membrane</location>
        <topology evidence="1">Peripheral membrane protein</topology>
        <orientation evidence="1">Cytoplasmic side</orientation>
    </subcellularLocation>
</comment>
<comment type="similarity">
    <text evidence="1">Belongs to the glycosyltransferase 28 family. MurG subfamily.</text>
</comment>
<protein>
    <recommendedName>
        <fullName evidence="1">UDP-N-acetylglucosamine--N-acetylmuramyl-(pentapeptide) pyrophosphoryl-undecaprenol N-acetylglucosamine transferase</fullName>
        <ecNumber evidence="1">2.4.1.227</ecNumber>
    </recommendedName>
    <alternativeName>
        <fullName evidence="1">Undecaprenyl-PP-MurNAc-pentapeptide-UDPGlcNAc GlcNAc transferase</fullName>
    </alternativeName>
</protein>
<accession>Q9CF92</accession>
<evidence type="ECO:0000255" key="1">
    <source>
        <dbReference type="HAMAP-Rule" id="MF_00033"/>
    </source>
</evidence>
<organism>
    <name type="scientific">Lactococcus lactis subsp. lactis (strain IL1403)</name>
    <name type="common">Streptococcus lactis</name>
    <dbReference type="NCBI Taxonomy" id="272623"/>
    <lineage>
        <taxon>Bacteria</taxon>
        <taxon>Bacillati</taxon>
        <taxon>Bacillota</taxon>
        <taxon>Bacilli</taxon>
        <taxon>Lactobacillales</taxon>
        <taxon>Streptococcaceae</taxon>
        <taxon>Lactococcus</taxon>
    </lineage>
</organism>
<feature type="chain" id="PRO_0000109181" description="UDP-N-acetylglucosamine--N-acetylmuramyl-(pentapeptide) pyrophosphoryl-undecaprenol N-acetylglucosamine transferase">
    <location>
        <begin position="1"/>
        <end position="357"/>
    </location>
</feature>
<feature type="binding site" evidence="1">
    <location>
        <begin position="10"/>
        <end position="12"/>
    </location>
    <ligand>
        <name>UDP-N-acetyl-alpha-D-glucosamine</name>
        <dbReference type="ChEBI" id="CHEBI:57705"/>
    </ligand>
</feature>
<feature type="binding site" evidence="1">
    <location>
        <position position="124"/>
    </location>
    <ligand>
        <name>UDP-N-acetyl-alpha-D-glucosamine</name>
        <dbReference type="ChEBI" id="CHEBI:57705"/>
    </ligand>
</feature>
<feature type="binding site" evidence="1">
    <location>
        <position position="189"/>
    </location>
    <ligand>
        <name>UDP-N-acetyl-alpha-D-glucosamine</name>
        <dbReference type="ChEBI" id="CHEBI:57705"/>
    </ligand>
</feature>
<feature type="binding site" evidence="1">
    <location>
        <position position="244"/>
    </location>
    <ligand>
        <name>UDP-N-acetyl-alpha-D-glucosamine</name>
        <dbReference type="ChEBI" id="CHEBI:57705"/>
    </ligand>
</feature>
<feature type="binding site" evidence="1">
    <location>
        <position position="289"/>
    </location>
    <ligand>
        <name>UDP-N-acetyl-alpha-D-glucosamine</name>
        <dbReference type="ChEBI" id="CHEBI:57705"/>
    </ligand>
</feature>
<proteinExistence type="inferred from homology"/>
<reference key="1">
    <citation type="journal article" date="2001" name="Genome Res.">
        <title>The complete genome sequence of the lactic acid bacterium Lactococcus lactis ssp. lactis IL1403.</title>
        <authorList>
            <person name="Bolotin A."/>
            <person name="Wincker P."/>
            <person name="Mauger S."/>
            <person name="Jaillon O."/>
            <person name="Malarme K."/>
            <person name="Weissenbach J."/>
            <person name="Ehrlich S.D."/>
            <person name="Sorokin A."/>
        </authorList>
    </citation>
    <scope>NUCLEOTIDE SEQUENCE [LARGE SCALE GENOMIC DNA]</scope>
    <source>
        <strain>IL1403</strain>
    </source>
</reference>